<comment type="function">
    <text evidence="1">Probably participates in deamination of adenosine-34 to inosine in many tRNAs.</text>
</comment>
<comment type="catalytic activity">
    <reaction evidence="3">
        <text>adenosine(34) in tRNA + H2O + H(+) = inosine(34) in tRNA + NH4(+)</text>
        <dbReference type="Rhea" id="RHEA:43168"/>
        <dbReference type="Rhea" id="RHEA-COMP:10373"/>
        <dbReference type="Rhea" id="RHEA-COMP:10374"/>
        <dbReference type="ChEBI" id="CHEBI:15377"/>
        <dbReference type="ChEBI" id="CHEBI:15378"/>
        <dbReference type="ChEBI" id="CHEBI:28938"/>
        <dbReference type="ChEBI" id="CHEBI:74411"/>
        <dbReference type="ChEBI" id="CHEBI:82852"/>
        <dbReference type="EC" id="3.5.4.33"/>
    </reaction>
</comment>
<comment type="cofactor">
    <cofactor evidence="1">
        <name>Zn(2+)</name>
        <dbReference type="ChEBI" id="CHEBI:29105"/>
    </cofactor>
</comment>
<comment type="similarity">
    <text evidence="3">Belongs to the cytidine and deoxycytidylate deaminase family. ADAT2 subfamily.</text>
</comment>
<keyword id="KW-0378">Hydrolase</keyword>
<keyword id="KW-0479">Metal-binding</keyword>
<keyword id="KW-1185">Reference proteome</keyword>
<keyword id="KW-0819">tRNA processing</keyword>
<keyword id="KW-0862">Zinc</keyword>
<evidence type="ECO:0000250" key="1"/>
<evidence type="ECO:0000255" key="2">
    <source>
        <dbReference type="PROSITE-ProRule" id="PRU01083"/>
    </source>
</evidence>
<evidence type="ECO:0000305" key="3"/>
<accession>Q4V7V8</accession>
<name>ADAT2_XENLA</name>
<sequence>MEPLQITEEIQNWMHKAFQMAQDALNNGEVPVGCLMVYGNQVVGKGRNEVNETKNATQHAEMVAIDQVLDWCEMNSKKSTDVFENIVLYVTVEPCIMCAGALRLLKIPLVVYGCRNERFGGCGSVLNVSGDDIPDTGTKFKCIGGYQAEKAIELLKTFYKQENPNAPKSKVRKKE</sequence>
<feature type="chain" id="PRO_0000287656" description="tRNA-specific adenosine deaminase 2">
    <location>
        <begin position="1"/>
        <end position="175"/>
    </location>
</feature>
<feature type="domain" description="CMP/dCMP-type deaminase" evidence="2">
    <location>
        <begin position="8"/>
        <end position="133"/>
    </location>
</feature>
<feature type="active site" description="Proton donor" evidence="1">
    <location>
        <position position="61"/>
    </location>
</feature>
<feature type="binding site" evidence="1">
    <location>
        <position position="59"/>
    </location>
    <ligand>
        <name>Zn(2+)</name>
        <dbReference type="ChEBI" id="CHEBI:29105"/>
        <note>catalytic</note>
    </ligand>
</feature>
<feature type="binding site" evidence="1">
    <location>
        <position position="95"/>
    </location>
    <ligand>
        <name>Zn(2+)</name>
        <dbReference type="ChEBI" id="CHEBI:29105"/>
        <note>catalytic</note>
    </ligand>
</feature>
<feature type="binding site" evidence="1">
    <location>
        <position position="98"/>
    </location>
    <ligand>
        <name>Zn(2+)</name>
        <dbReference type="ChEBI" id="CHEBI:29105"/>
        <note>catalytic</note>
    </ligand>
</feature>
<proteinExistence type="evidence at transcript level"/>
<protein>
    <recommendedName>
        <fullName>tRNA-specific adenosine deaminase 2</fullName>
        <ecNumber evidence="3">3.5.4.33</ecNumber>
    </recommendedName>
    <alternativeName>
        <fullName>Deaminase domain-containing protein 1</fullName>
    </alternativeName>
    <alternativeName>
        <fullName>tRNA-specific adenosine-34 deaminase subunit ADAT2</fullName>
    </alternativeName>
</protein>
<gene>
    <name type="primary">adat2</name>
    <name type="synonym">deadc1</name>
</gene>
<organism>
    <name type="scientific">Xenopus laevis</name>
    <name type="common">African clawed frog</name>
    <dbReference type="NCBI Taxonomy" id="8355"/>
    <lineage>
        <taxon>Eukaryota</taxon>
        <taxon>Metazoa</taxon>
        <taxon>Chordata</taxon>
        <taxon>Craniata</taxon>
        <taxon>Vertebrata</taxon>
        <taxon>Euteleostomi</taxon>
        <taxon>Amphibia</taxon>
        <taxon>Batrachia</taxon>
        <taxon>Anura</taxon>
        <taxon>Pipoidea</taxon>
        <taxon>Pipidae</taxon>
        <taxon>Xenopodinae</taxon>
        <taxon>Xenopus</taxon>
        <taxon>Xenopus</taxon>
    </lineage>
</organism>
<reference key="1">
    <citation type="submission" date="2005-06" db="EMBL/GenBank/DDBJ databases">
        <authorList>
            <consortium name="NIH - Xenopus Gene Collection (XGC) project"/>
        </authorList>
    </citation>
    <scope>NUCLEOTIDE SEQUENCE [LARGE SCALE MRNA]</scope>
    <source>
        <tissue>Oocyte</tissue>
    </source>
</reference>
<dbReference type="EC" id="3.5.4.33" evidence="3"/>
<dbReference type="EMBL" id="BC097698">
    <property type="protein sequence ID" value="AAH97698.1"/>
    <property type="molecule type" value="mRNA"/>
</dbReference>
<dbReference type="RefSeq" id="NP_001089483.1">
    <property type="nucleotide sequence ID" value="NM_001096014.1"/>
</dbReference>
<dbReference type="SMR" id="Q4V7V8"/>
<dbReference type="DNASU" id="734534"/>
<dbReference type="AGR" id="Xenbase:XB-GENE-963032"/>
<dbReference type="Xenbase" id="XB-GENE-963032">
    <property type="gene designation" value="adat2.L"/>
</dbReference>
<dbReference type="OrthoDB" id="408702at2759"/>
<dbReference type="Proteomes" id="UP000186698">
    <property type="component" value="Unplaced"/>
</dbReference>
<dbReference type="Bgee" id="734534">
    <property type="expression patterns" value="Expressed in zone of skin and 19 other cell types or tissues"/>
</dbReference>
<dbReference type="GO" id="GO:0005737">
    <property type="term" value="C:cytoplasm"/>
    <property type="evidence" value="ECO:0007669"/>
    <property type="project" value="TreeGrafter"/>
</dbReference>
<dbReference type="GO" id="GO:0005634">
    <property type="term" value="C:nucleus"/>
    <property type="evidence" value="ECO:0007669"/>
    <property type="project" value="TreeGrafter"/>
</dbReference>
<dbReference type="GO" id="GO:0052717">
    <property type="term" value="F:tRNA-specific adenosine-34 deaminase activity"/>
    <property type="evidence" value="ECO:0000318"/>
    <property type="project" value="GO_Central"/>
</dbReference>
<dbReference type="GO" id="GO:0008270">
    <property type="term" value="F:zinc ion binding"/>
    <property type="evidence" value="ECO:0007669"/>
    <property type="project" value="InterPro"/>
</dbReference>
<dbReference type="GO" id="GO:0002100">
    <property type="term" value="P:tRNA wobble adenosine to inosine editing"/>
    <property type="evidence" value="ECO:0000318"/>
    <property type="project" value="GO_Central"/>
</dbReference>
<dbReference type="CDD" id="cd01285">
    <property type="entry name" value="nucleoside_deaminase"/>
    <property type="match status" value="1"/>
</dbReference>
<dbReference type="FunFam" id="3.40.140.10:FF:000036">
    <property type="entry name" value="tRNA-specific adenosine deaminase 2"/>
    <property type="match status" value="1"/>
</dbReference>
<dbReference type="Gene3D" id="3.40.140.10">
    <property type="entry name" value="Cytidine Deaminase, domain 2"/>
    <property type="match status" value="1"/>
</dbReference>
<dbReference type="HAMAP" id="MF_00972">
    <property type="entry name" value="tRNA_aden_deaminase"/>
    <property type="match status" value="1"/>
</dbReference>
<dbReference type="InterPro" id="IPR016192">
    <property type="entry name" value="APOBEC/CMP_deaminase_Zn-bd"/>
</dbReference>
<dbReference type="InterPro" id="IPR002125">
    <property type="entry name" value="CMP_dCMP_dom"/>
</dbReference>
<dbReference type="InterPro" id="IPR016193">
    <property type="entry name" value="Cytidine_deaminase-like"/>
</dbReference>
<dbReference type="InterPro" id="IPR028883">
    <property type="entry name" value="tRNA_aden_deaminase"/>
</dbReference>
<dbReference type="PANTHER" id="PTHR11079">
    <property type="entry name" value="CYTOSINE DEAMINASE FAMILY MEMBER"/>
    <property type="match status" value="1"/>
</dbReference>
<dbReference type="PANTHER" id="PTHR11079:SF149">
    <property type="entry name" value="TRNA-SPECIFIC ADENOSINE DEAMINASE 2"/>
    <property type="match status" value="1"/>
</dbReference>
<dbReference type="Pfam" id="PF14437">
    <property type="entry name" value="MafB19-deam"/>
    <property type="match status" value="1"/>
</dbReference>
<dbReference type="SUPFAM" id="SSF53927">
    <property type="entry name" value="Cytidine deaminase-like"/>
    <property type="match status" value="1"/>
</dbReference>
<dbReference type="PROSITE" id="PS00903">
    <property type="entry name" value="CYT_DCMP_DEAMINASES_1"/>
    <property type="match status" value="1"/>
</dbReference>
<dbReference type="PROSITE" id="PS51747">
    <property type="entry name" value="CYT_DCMP_DEAMINASES_2"/>
    <property type="match status" value="1"/>
</dbReference>